<keyword id="KW-0131">Cell cycle</keyword>
<keyword id="KW-0132">Cell division</keyword>
<keyword id="KW-0156">Chromatin regulator</keyword>
<keyword id="KW-0963">Cytoplasm</keyword>
<keyword id="KW-0206">Cytoskeleton</keyword>
<keyword id="KW-0227">DNA damage</keyword>
<keyword id="KW-0234">DNA repair</keyword>
<keyword id="KW-0378">Hydrolase</keyword>
<keyword id="KW-0479">Metal-binding</keyword>
<keyword id="KW-0482">Metalloprotease</keyword>
<keyword id="KW-0498">Mitosis</keyword>
<keyword id="KW-0539">Nucleus</keyword>
<keyword id="KW-0645">Protease</keyword>
<keyword id="KW-1185">Reference proteome</keyword>
<keyword id="KW-0833">Ubl conjugation pathway</keyword>
<keyword id="KW-0862">Zinc</keyword>
<gene>
    <name type="primary">brcc3</name>
    <name type="synonym">brcc36</name>
</gene>
<organism>
    <name type="scientific">Salmo salar</name>
    <name type="common">Atlantic salmon</name>
    <dbReference type="NCBI Taxonomy" id="8030"/>
    <lineage>
        <taxon>Eukaryota</taxon>
        <taxon>Metazoa</taxon>
        <taxon>Chordata</taxon>
        <taxon>Craniata</taxon>
        <taxon>Vertebrata</taxon>
        <taxon>Euteleostomi</taxon>
        <taxon>Actinopterygii</taxon>
        <taxon>Neopterygii</taxon>
        <taxon>Teleostei</taxon>
        <taxon>Protacanthopterygii</taxon>
        <taxon>Salmoniformes</taxon>
        <taxon>Salmonidae</taxon>
        <taxon>Salmoninae</taxon>
        <taxon>Salmo</taxon>
    </lineage>
</organism>
<name>BRCC3_SALSA</name>
<protein>
    <recommendedName>
        <fullName>Lys-63-specific deubiquitinase BRCC36</fullName>
        <ecNumber evidence="2">3.4.19.-</ecNumber>
    </recommendedName>
    <alternativeName>
        <fullName>BRCA1-A complex subunit BRCC36</fullName>
    </alternativeName>
    <alternativeName>
        <fullName>BRCA1/BRCA2-containing complex subunit 3</fullName>
    </alternativeName>
    <alternativeName>
        <fullName>BRCA1/BRCA2-containing complex subunit 36</fullName>
    </alternativeName>
    <alternativeName>
        <fullName>BRISC complex subunit BRCC36</fullName>
    </alternativeName>
</protein>
<accession>B5X8M4</accession>
<reference key="1">
    <citation type="journal article" date="2010" name="BMC Genomics">
        <title>Salmo salar and Esox lucius full-length cDNA sequences reveal changes in evolutionary pressures on a post-tetraploidization genome.</title>
        <authorList>
            <person name="Leong J.S."/>
            <person name="Jantzen S.G."/>
            <person name="von Schalburg K.R."/>
            <person name="Cooper G.A."/>
            <person name="Messmer A.M."/>
            <person name="Liao N.Y."/>
            <person name="Munro S."/>
            <person name="Moore R."/>
            <person name="Holt R.A."/>
            <person name="Jones S.J."/>
            <person name="Davidson W.S."/>
            <person name="Koop B.F."/>
        </authorList>
    </citation>
    <scope>NUCLEOTIDE SEQUENCE [LARGE SCALE MRNA]</scope>
    <source>
        <tissue>Brain</tissue>
    </source>
</reference>
<evidence type="ECO:0000250" key="1">
    <source>
        <dbReference type="UniProtKB" id="E2AXC7"/>
    </source>
</evidence>
<evidence type="ECO:0000250" key="2">
    <source>
        <dbReference type="UniProtKB" id="P46736"/>
    </source>
</evidence>
<evidence type="ECO:0000250" key="3">
    <source>
        <dbReference type="UniProtKB" id="P46737"/>
    </source>
</evidence>
<evidence type="ECO:0000255" key="4">
    <source>
        <dbReference type="PROSITE-ProRule" id="PRU01182"/>
    </source>
</evidence>
<evidence type="ECO:0000305" key="5"/>
<feature type="chain" id="PRO_0000373948" description="Lys-63-specific deubiquitinase BRCC36">
    <location>
        <begin position="1"/>
        <end position="260"/>
    </location>
</feature>
<feature type="domain" description="MPN" evidence="4">
    <location>
        <begin position="6"/>
        <end position="149"/>
    </location>
</feature>
<feature type="short sequence motif" description="JAMM motif" evidence="4">
    <location>
        <begin position="92"/>
        <end position="105"/>
    </location>
</feature>
<feature type="binding site" evidence="4">
    <location>
        <position position="92"/>
    </location>
    <ligand>
        <name>Zn(2+)</name>
        <dbReference type="ChEBI" id="CHEBI:29105"/>
        <note>catalytic</note>
    </ligand>
</feature>
<feature type="binding site" evidence="4">
    <location>
        <position position="94"/>
    </location>
    <ligand>
        <name>Zn(2+)</name>
        <dbReference type="ChEBI" id="CHEBI:29105"/>
        <note>catalytic</note>
    </ligand>
</feature>
<feature type="binding site" evidence="4">
    <location>
        <position position="105"/>
    </location>
    <ligand>
        <name>Zn(2+)</name>
        <dbReference type="ChEBI" id="CHEBI:29105"/>
        <note>catalytic</note>
    </ligand>
</feature>
<proteinExistence type="evidence at transcript level"/>
<comment type="function">
    <text evidence="2 3">Metalloprotease that specifically cleaves 'Lys-63'-linked polyubiquitin chains. Does not have activity toward 'Lys-48'-linked polyubiquitin chains. Component of the BRCA1-A complex, a complex that specifically recognizes 'Lys-63'-linked ubiquitinated histones H2A and H2AX at DNA lesions sites, leading to target the brca1-bard1 heterodimer to sites of DNA damage at double-strand breaks (DSBs). In the BRCA1-A complex, it specifically removes 'Lys-63'-linked ubiquitin on histones H2A and H2AX, antagonizing the rnf8-dependent ubiquitination at double-strand breaks (DSBs). Catalytic subunit of the BRISC complex, a multiprotein complex that specifically cleaves 'Lys-63'-linked ubiquitin in various substrates. Mediates the specific 'Lys-63'-specific deubiquitination associated with the COP9 signalosome complex (CSN), via the interaction of the BRISC complex with the CSN complex. The BRISC complex is required for normal mitotic spindle assembly and microtubule attachment to kinetochores via its role in deubiquitinating numa1. Plays a role in interferon signaling via its role in the deubiquitination of the interferon receptor ifnar1; deubiquitination increases ifnar1 activity by enhancing its stability and cell surface expression. Acts as a regulator of the NLRP3 inflammasome by mediating deubiquitination of nlrp3. Down-regulates the response to bacterial lipopolysaccharide (LPS) via its role in ifnar1 deubiquitination.</text>
</comment>
<comment type="cofactor">
    <cofactor evidence="1">
        <name>Zn(2+)</name>
        <dbReference type="ChEBI" id="CHEBI:29105"/>
    </cofactor>
    <text evidence="1">Binds 1 zinc ion per subunit.</text>
</comment>
<comment type="subunit">
    <text evidence="2">Component of the BRCA1-A complex, at least composed of brca1, bard1, uimc1/rap80, abraxas1, brcc3/brcc36, babam2 and babam1/nba1. In the BRCA1-A complex, interacts directly with abraxas1 and babam2. Component of the BRISC complex, at least composed of abraxas2, brcc3/brcc36, babam2 and babam1/nba1. Within the complex, interacts directly with abraxas2. Both the BRCA1-A complex and the BRISC complex bind polyubiquitin (By similarity).</text>
</comment>
<comment type="subcellular location">
    <subcellularLocation>
        <location evidence="2">Nucleus</location>
    </subcellularLocation>
    <subcellularLocation>
        <location evidence="2">Cytoplasm</location>
    </subcellularLocation>
    <subcellularLocation>
        <location evidence="2">Cytoplasm</location>
        <location evidence="2">Cytoskeleton</location>
        <location evidence="2">Spindle pole</location>
    </subcellularLocation>
    <text evidence="2">Localizes at sites of DNA damage at double-strand breaks (DSBs). Interaction with abraxas2 retains brcc3 in the cytoplasm.</text>
</comment>
<comment type="similarity">
    <text evidence="5">Belongs to the peptidase M67A family. BRCC36 subfamily.</text>
</comment>
<dbReference type="EC" id="3.4.19.-" evidence="2"/>
<dbReference type="EMBL" id="BT047393">
    <property type="protein sequence ID" value="ACI67194.1"/>
    <property type="molecule type" value="mRNA"/>
</dbReference>
<dbReference type="RefSeq" id="NP_001134356.1">
    <property type="nucleotide sequence ID" value="NM_001140884.1"/>
</dbReference>
<dbReference type="SMR" id="B5X8M4"/>
<dbReference type="STRING" id="8030.ENSSSAP00000022555"/>
<dbReference type="MEROPS" id="M67.004"/>
<dbReference type="PaxDb" id="8030-ENSSSAP00000022555"/>
<dbReference type="Ensembl" id="ENSSSAT00020198440">
    <property type="protein sequence ID" value="ENSSSAP00020148848"/>
    <property type="gene ID" value="ENSSSAG00020083339"/>
</dbReference>
<dbReference type="Ensembl" id="ENSSSAT00075126406">
    <property type="protein sequence ID" value="ENSSSAP00075094390"/>
    <property type="gene ID" value="ENSSSAG00075059859"/>
</dbReference>
<dbReference type="GeneID" id="100195855"/>
<dbReference type="KEGG" id="sasa:100195855"/>
<dbReference type="CTD" id="79184"/>
<dbReference type="OrthoDB" id="388913at7898"/>
<dbReference type="Proteomes" id="UP000087266">
    <property type="component" value="Chromosome ssa11"/>
</dbReference>
<dbReference type="GO" id="GO:0070531">
    <property type="term" value="C:BRCA1-A complex"/>
    <property type="evidence" value="ECO:0000250"/>
    <property type="project" value="UniProtKB"/>
</dbReference>
<dbReference type="GO" id="GO:0070552">
    <property type="term" value="C:BRISC complex"/>
    <property type="evidence" value="ECO:0000250"/>
    <property type="project" value="UniProtKB"/>
</dbReference>
<dbReference type="GO" id="GO:0005737">
    <property type="term" value="C:cytoplasm"/>
    <property type="evidence" value="ECO:0007669"/>
    <property type="project" value="UniProtKB-SubCell"/>
</dbReference>
<dbReference type="GO" id="GO:0005634">
    <property type="term" value="C:nucleus"/>
    <property type="evidence" value="ECO:0000250"/>
    <property type="project" value="UniProtKB"/>
</dbReference>
<dbReference type="GO" id="GO:0000922">
    <property type="term" value="C:spindle pole"/>
    <property type="evidence" value="ECO:0007669"/>
    <property type="project" value="UniProtKB-SubCell"/>
</dbReference>
<dbReference type="GO" id="GO:0004843">
    <property type="term" value="F:cysteine-type deubiquitinase activity"/>
    <property type="evidence" value="ECO:0007669"/>
    <property type="project" value="InterPro"/>
</dbReference>
<dbReference type="GO" id="GO:0046872">
    <property type="term" value="F:metal ion binding"/>
    <property type="evidence" value="ECO:0007669"/>
    <property type="project" value="UniProtKB-KW"/>
</dbReference>
<dbReference type="GO" id="GO:0140492">
    <property type="term" value="F:metal-dependent deubiquitinase activity"/>
    <property type="evidence" value="ECO:0000250"/>
    <property type="project" value="UniProtKB"/>
</dbReference>
<dbReference type="GO" id="GO:0008237">
    <property type="term" value="F:metallopeptidase activity"/>
    <property type="evidence" value="ECO:0000250"/>
    <property type="project" value="UniProtKB"/>
</dbReference>
<dbReference type="GO" id="GO:0031593">
    <property type="term" value="F:polyubiquitin modification-dependent protein binding"/>
    <property type="evidence" value="ECO:0000250"/>
    <property type="project" value="UniProtKB"/>
</dbReference>
<dbReference type="GO" id="GO:0051301">
    <property type="term" value="P:cell division"/>
    <property type="evidence" value="ECO:0007669"/>
    <property type="project" value="UniProtKB-KW"/>
</dbReference>
<dbReference type="GO" id="GO:0140861">
    <property type="term" value="P:DNA repair-dependent chromatin remodeling"/>
    <property type="evidence" value="ECO:0000250"/>
    <property type="project" value="UniProtKB"/>
</dbReference>
<dbReference type="GO" id="GO:0006302">
    <property type="term" value="P:double-strand break repair"/>
    <property type="evidence" value="ECO:0000250"/>
    <property type="project" value="UniProtKB"/>
</dbReference>
<dbReference type="GO" id="GO:0007095">
    <property type="term" value="P:mitotic G2 DNA damage checkpoint signaling"/>
    <property type="evidence" value="ECO:0000250"/>
    <property type="project" value="UniProtKB"/>
</dbReference>
<dbReference type="GO" id="GO:0045739">
    <property type="term" value="P:positive regulation of DNA repair"/>
    <property type="evidence" value="ECO:0000250"/>
    <property type="project" value="UniProtKB"/>
</dbReference>
<dbReference type="GO" id="GO:1900227">
    <property type="term" value="P:positive regulation of NLRP3 inflammasome complex assembly"/>
    <property type="evidence" value="ECO:0000250"/>
    <property type="project" value="UniProtKB"/>
</dbReference>
<dbReference type="GO" id="GO:0070536">
    <property type="term" value="P:protein K63-linked deubiquitination"/>
    <property type="evidence" value="ECO:0000250"/>
    <property type="project" value="UniProtKB"/>
</dbReference>
<dbReference type="GO" id="GO:0006508">
    <property type="term" value="P:proteolysis"/>
    <property type="evidence" value="ECO:0007669"/>
    <property type="project" value="UniProtKB-KW"/>
</dbReference>
<dbReference type="GO" id="GO:0010212">
    <property type="term" value="P:response to ionizing radiation"/>
    <property type="evidence" value="ECO:0000250"/>
    <property type="project" value="UniProtKB"/>
</dbReference>
<dbReference type="CDD" id="cd08068">
    <property type="entry name" value="MPN_BRCC36"/>
    <property type="match status" value="1"/>
</dbReference>
<dbReference type="FunFam" id="3.40.140.10:FF:000015">
    <property type="entry name" value="Lys-63-specific deubiquitinase BRCC36 isoform 3"/>
    <property type="match status" value="1"/>
</dbReference>
<dbReference type="Gene3D" id="3.40.140.10">
    <property type="entry name" value="Cytidine Deaminase, domain 2"/>
    <property type="match status" value="1"/>
</dbReference>
<dbReference type="InterPro" id="IPR040749">
    <property type="entry name" value="BRCC36_C"/>
</dbReference>
<dbReference type="InterPro" id="IPR000555">
    <property type="entry name" value="JAMM/MPN+_dom"/>
</dbReference>
<dbReference type="InterPro" id="IPR050242">
    <property type="entry name" value="JAMM_MPN+_peptidase_M67A"/>
</dbReference>
<dbReference type="InterPro" id="IPR037518">
    <property type="entry name" value="MPN"/>
</dbReference>
<dbReference type="InterPro" id="IPR033860">
    <property type="entry name" value="MPN_BRCC36"/>
</dbReference>
<dbReference type="PANTHER" id="PTHR10410">
    <property type="entry name" value="EUKARYOTIC TRANSLATION INITIATION FACTOR 3 -RELATED"/>
    <property type="match status" value="1"/>
</dbReference>
<dbReference type="Pfam" id="PF18110">
    <property type="entry name" value="BRCC36_C"/>
    <property type="match status" value="1"/>
</dbReference>
<dbReference type="Pfam" id="PF01398">
    <property type="entry name" value="JAB"/>
    <property type="match status" value="1"/>
</dbReference>
<dbReference type="SMART" id="SM00232">
    <property type="entry name" value="JAB_MPN"/>
    <property type="match status" value="1"/>
</dbReference>
<dbReference type="SUPFAM" id="SSF102712">
    <property type="entry name" value="JAB1/MPN domain"/>
    <property type="match status" value="1"/>
</dbReference>
<dbReference type="PROSITE" id="PS50249">
    <property type="entry name" value="MPN"/>
    <property type="match status" value="1"/>
</dbReference>
<sequence>MAVSAVHLESDAFLVCMNHALSTEKEEVMGLCIGEVDTNRIVHIHSVIILRRSDKRKDRVEISPEQLSSAATEAERLAEMTGRPMRVVGWYHSHPHITVWPSHVDVRTQAMYQMMDQGFVGLIFSCFIEDKNTKTGRVLYTCFQSVQAQKGSEYERIEIPIHVVPHEAIGKVCLESAVELPRILCQEEQDTYRKIHSLTHLDPITKIHNGSVFTKNLCSQMSAVSGPLLQWLEDRLEQNRQSVIELQLEKERLTQELATM</sequence>